<protein>
    <recommendedName>
        <fullName evidence="1">Ribosomal RNA small subunit methyltransferase H</fullName>
        <ecNumber evidence="1">2.1.1.199</ecNumber>
    </recommendedName>
    <alternativeName>
        <fullName evidence="1">16S rRNA m(4)C1402 methyltransferase</fullName>
    </alternativeName>
    <alternativeName>
        <fullName evidence="1">rRNA (cytosine-N(4)-)-methyltransferase RsmH</fullName>
    </alternativeName>
</protein>
<feature type="chain" id="PRO_0000108715" description="Ribosomal RNA small subunit methyltransferase H">
    <location>
        <begin position="1"/>
        <end position="315"/>
    </location>
</feature>
<feature type="binding site" evidence="1">
    <location>
        <begin position="35"/>
        <end position="37"/>
    </location>
    <ligand>
        <name>S-adenosyl-L-methionine</name>
        <dbReference type="ChEBI" id="CHEBI:59789"/>
    </ligand>
</feature>
<feature type="binding site" evidence="1">
    <location>
        <position position="55"/>
    </location>
    <ligand>
        <name>S-adenosyl-L-methionine</name>
        <dbReference type="ChEBI" id="CHEBI:59789"/>
    </ligand>
</feature>
<feature type="binding site" evidence="1">
    <location>
        <position position="84"/>
    </location>
    <ligand>
        <name>S-adenosyl-L-methionine</name>
        <dbReference type="ChEBI" id="CHEBI:59789"/>
    </ligand>
</feature>
<feature type="binding site" evidence="1">
    <location>
        <position position="105"/>
    </location>
    <ligand>
        <name>S-adenosyl-L-methionine</name>
        <dbReference type="ChEBI" id="CHEBI:59789"/>
    </ligand>
</feature>
<feature type="binding site" evidence="1">
    <location>
        <position position="112"/>
    </location>
    <ligand>
        <name>S-adenosyl-L-methionine</name>
        <dbReference type="ChEBI" id="CHEBI:59789"/>
    </ligand>
</feature>
<accession>Q8E1R8</accession>
<proteinExistence type="inferred from homology"/>
<dbReference type="EC" id="2.1.1.199" evidence="1"/>
<dbReference type="EMBL" id="AE009948">
    <property type="protein sequence ID" value="AAM99192.1"/>
    <property type="status" value="ALT_INIT"/>
    <property type="molecule type" value="Genomic_DNA"/>
</dbReference>
<dbReference type="RefSeq" id="NP_687320.2">
    <property type="nucleotide sequence ID" value="NC_004116.1"/>
</dbReference>
<dbReference type="RefSeq" id="WP_000180266.1">
    <property type="nucleotide sequence ID" value="NC_004116.1"/>
</dbReference>
<dbReference type="SMR" id="Q8E1R8"/>
<dbReference type="STRING" id="208435.SAG0285"/>
<dbReference type="KEGG" id="sag:SAG0285"/>
<dbReference type="PATRIC" id="fig|208435.3.peg.283"/>
<dbReference type="HOGENOM" id="CLU_038422_2_0_9"/>
<dbReference type="OrthoDB" id="9806637at2"/>
<dbReference type="Proteomes" id="UP000000821">
    <property type="component" value="Chromosome"/>
</dbReference>
<dbReference type="GO" id="GO:0005737">
    <property type="term" value="C:cytoplasm"/>
    <property type="evidence" value="ECO:0007669"/>
    <property type="project" value="UniProtKB-SubCell"/>
</dbReference>
<dbReference type="GO" id="GO:0071424">
    <property type="term" value="F:rRNA (cytosine-N4-)-methyltransferase activity"/>
    <property type="evidence" value="ECO:0007669"/>
    <property type="project" value="UniProtKB-UniRule"/>
</dbReference>
<dbReference type="GO" id="GO:0070475">
    <property type="term" value="P:rRNA base methylation"/>
    <property type="evidence" value="ECO:0007669"/>
    <property type="project" value="UniProtKB-UniRule"/>
</dbReference>
<dbReference type="FunFam" id="1.10.150.170:FF:000001">
    <property type="entry name" value="Ribosomal RNA small subunit methyltransferase H"/>
    <property type="match status" value="1"/>
</dbReference>
<dbReference type="Gene3D" id="1.10.150.170">
    <property type="entry name" value="Putative methyltransferase TM0872, insert domain"/>
    <property type="match status" value="1"/>
</dbReference>
<dbReference type="Gene3D" id="3.40.50.150">
    <property type="entry name" value="Vaccinia Virus protein VP39"/>
    <property type="match status" value="1"/>
</dbReference>
<dbReference type="HAMAP" id="MF_01007">
    <property type="entry name" value="16SrRNA_methyltr_H"/>
    <property type="match status" value="1"/>
</dbReference>
<dbReference type="InterPro" id="IPR002903">
    <property type="entry name" value="RsmH"/>
</dbReference>
<dbReference type="InterPro" id="IPR023397">
    <property type="entry name" value="SAM-dep_MeTrfase_MraW_recog"/>
</dbReference>
<dbReference type="InterPro" id="IPR029063">
    <property type="entry name" value="SAM-dependent_MTases_sf"/>
</dbReference>
<dbReference type="NCBIfam" id="TIGR00006">
    <property type="entry name" value="16S rRNA (cytosine(1402)-N(4))-methyltransferase RsmH"/>
    <property type="match status" value="1"/>
</dbReference>
<dbReference type="PANTHER" id="PTHR11265:SF0">
    <property type="entry name" value="12S RRNA N4-METHYLCYTIDINE METHYLTRANSFERASE"/>
    <property type="match status" value="1"/>
</dbReference>
<dbReference type="PANTHER" id="PTHR11265">
    <property type="entry name" value="S-ADENOSYL-METHYLTRANSFERASE MRAW"/>
    <property type="match status" value="1"/>
</dbReference>
<dbReference type="Pfam" id="PF01795">
    <property type="entry name" value="Methyltransf_5"/>
    <property type="match status" value="1"/>
</dbReference>
<dbReference type="PIRSF" id="PIRSF004486">
    <property type="entry name" value="MraW"/>
    <property type="match status" value="1"/>
</dbReference>
<dbReference type="SUPFAM" id="SSF81799">
    <property type="entry name" value="Putative methyltransferase TM0872, insert domain"/>
    <property type="match status" value="1"/>
</dbReference>
<dbReference type="SUPFAM" id="SSF53335">
    <property type="entry name" value="S-adenosyl-L-methionine-dependent methyltransferases"/>
    <property type="match status" value="1"/>
</dbReference>
<reference key="1">
    <citation type="journal article" date="2002" name="Proc. Natl. Acad. Sci. U.S.A.">
        <title>Complete genome sequence and comparative genomic analysis of an emerging human pathogen, serotype V Streptococcus agalactiae.</title>
        <authorList>
            <person name="Tettelin H."/>
            <person name="Masignani V."/>
            <person name="Cieslewicz M.J."/>
            <person name="Eisen J.A."/>
            <person name="Peterson S.N."/>
            <person name="Wessels M.R."/>
            <person name="Paulsen I.T."/>
            <person name="Nelson K.E."/>
            <person name="Margarit I."/>
            <person name="Read T.D."/>
            <person name="Madoff L.C."/>
            <person name="Wolf A.M."/>
            <person name="Beanan M.J."/>
            <person name="Brinkac L.M."/>
            <person name="Daugherty S.C."/>
            <person name="DeBoy R.T."/>
            <person name="Durkin A.S."/>
            <person name="Kolonay J.F."/>
            <person name="Madupu R."/>
            <person name="Lewis M.R."/>
            <person name="Radune D."/>
            <person name="Fedorova N.B."/>
            <person name="Scanlan D."/>
            <person name="Khouri H.M."/>
            <person name="Mulligan S."/>
            <person name="Carty H.A."/>
            <person name="Cline R.T."/>
            <person name="Van Aken S.E."/>
            <person name="Gill J."/>
            <person name="Scarselli M."/>
            <person name="Mora M."/>
            <person name="Iacobini E.T."/>
            <person name="Brettoni C."/>
            <person name="Galli G."/>
            <person name="Mariani M."/>
            <person name="Vegni F."/>
            <person name="Maione D."/>
            <person name="Rinaudo D."/>
            <person name="Rappuoli R."/>
            <person name="Telford J.L."/>
            <person name="Kasper D.L."/>
            <person name="Grandi G."/>
            <person name="Fraser C.M."/>
        </authorList>
    </citation>
    <scope>NUCLEOTIDE SEQUENCE [LARGE SCALE GENOMIC DNA]</scope>
    <source>
        <strain>ATCC BAA-611 / 2603 V/R</strain>
    </source>
</reference>
<name>RSMH_STRA5</name>
<organism>
    <name type="scientific">Streptococcus agalactiae serotype V (strain ATCC BAA-611 / 2603 V/R)</name>
    <dbReference type="NCBI Taxonomy" id="208435"/>
    <lineage>
        <taxon>Bacteria</taxon>
        <taxon>Bacillati</taxon>
        <taxon>Bacillota</taxon>
        <taxon>Bacilli</taxon>
        <taxon>Lactobacillales</taxon>
        <taxon>Streptococcaceae</taxon>
        <taxon>Streptococcus</taxon>
    </lineage>
</organism>
<comment type="function">
    <text evidence="1">Specifically methylates the N4 position of cytidine in position 1402 (C1402) of 16S rRNA.</text>
</comment>
<comment type="catalytic activity">
    <reaction evidence="1">
        <text>cytidine(1402) in 16S rRNA + S-adenosyl-L-methionine = N(4)-methylcytidine(1402) in 16S rRNA + S-adenosyl-L-homocysteine + H(+)</text>
        <dbReference type="Rhea" id="RHEA:42928"/>
        <dbReference type="Rhea" id="RHEA-COMP:10286"/>
        <dbReference type="Rhea" id="RHEA-COMP:10287"/>
        <dbReference type="ChEBI" id="CHEBI:15378"/>
        <dbReference type="ChEBI" id="CHEBI:57856"/>
        <dbReference type="ChEBI" id="CHEBI:59789"/>
        <dbReference type="ChEBI" id="CHEBI:74506"/>
        <dbReference type="ChEBI" id="CHEBI:82748"/>
        <dbReference type="EC" id="2.1.1.199"/>
    </reaction>
</comment>
<comment type="subcellular location">
    <subcellularLocation>
        <location evidence="1">Cytoplasm</location>
    </subcellularLocation>
</comment>
<comment type="similarity">
    <text evidence="1">Belongs to the methyltransferase superfamily. RsmH family.</text>
</comment>
<comment type="sequence caution" evidence="2">
    <conflict type="erroneous initiation">
        <sequence resource="EMBL-CDS" id="AAM99192"/>
    </conflict>
</comment>
<evidence type="ECO:0000255" key="1">
    <source>
        <dbReference type="HAMAP-Rule" id="MF_01007"/>
    </source>
</evidence>
<evidence type="ECO:0000305" key="2"/>
<sequence>MTNDFHHITVLLHETVDMLDIKPDGIYVDATLGGAGHSEYLLSQLGPDGHLYAFDQDQKAIDNAHIRLKKYVDTGQVTFIKDNFRNLSSNLKALGVSEINGICYDLGVSSPQLDERERGFSYKQDAPLDMRMNREQSLTAYDVVNTYSYHDLVRIFFKYGEDKFSKQIARKIEQVRAEKTISTTTELAEIIKSSKSAKELKKKGHPAKQIFQAIRIEVNDELGAADESIQQAMDLLAVDGRISVITFHSLEDRLTKQLFKEASTVEVPKGLPFIPDDLQPKMELVNRKPILPSQEELEANNRAHSAKLRVARRIR</sequence>
<gene>
    <name evidence="1" type="primary">rsmH</name>
    <name type="synonym">mraW</name>
    <name type="ordered locus">SAG0285</name>
</gene>
<keyword id="KW-0963">Cytoplasm</keyword>
<keyword id="KW-0489">Methyltransferase</keyword>
<keyword id="KW-1185">Reference proteome</keyword>
<keyword id="KW-0698">rRNA processing</keyword>
<keyword id="KW-0949">S-adenosyl-L-methionine</keyword>
<keyword id="KW-0808">Transferase</keyword>